<protein>
    <recommendedName>
        <fullName>Phosphorylase b kinase regulatory subunit alpha, liver isoform</fullName>
        <shortName>Phosphorylase kinase alpha L subunit</shortName>
    </recommendedName>
</protein>
<proteinExistence type="evidence at transcript level"/>
<name>KPB2_RABIT</name>
<accession>P46018</accession>
<evidence type="ECO:0000250" key="1">
    <source>
        <dbReference type="UniProtKB" id="P18688"/>
    </source>
</evidence>
<evidence type="ECO:0000250" key="2">
    <source>
        <dbReference type="UniProtKB" id="P46019"/>
    </source>
</evidence>
<evidence type="ECO:0000255" key="3"/>
<evidence type="ECO:0000256" key="4">
    <source>
        <dbReference type="SAM" id="MobiDB-lite"/>
    </source>
</evidence>
<evidence type="ECO:0000305" key="5"/>
<dbReference type="EMBL" id="X60421">
    <property type="protein sequence ID" value="CAA42952.1"/>
    <property type="molecule type" value="mRNA"/>
</dbReference>
<dbReference type="PIR" id="S24109">
    <property type="entry name" value="S24109"/>
</dbReference>
<dbReference type="RefSeq" id="NP_001129153.1">
    <property type="nucleotide sequence ID" value="NM_001135681.1"/>
</dbReference>
<dbReference type="SMR" id="P46018"/>
<dbReference type="FunCoup" id="P46018">
    <property type="interactions" value="76"/>
</dbReference>
<dbReference type="STRING" id="9986.ENSOCUP00000041718"/>
<dbReference type="PaxDb" id="9986-ENSOCUP00000022300"/>
<dbReference type="GeneID" id="100190898"/>
<dbReference type="KEGG" id="ocu:100190898"/>
<dbReference type="CTD" id="5256"/>
<dbReference type="eggNOG" id="KOG3635">
    <property type="taxonomic scope" value="Eukaryota"/>
</dbReference>
<dbReference type="InParanoid" id="P46018"/>
<dbReference type="OrthoDB" id="5971574at2759"/>
<dbReference type="UniPathway" id="UPA00163"/>
<dbReference type="Proteomes" id="UP000001811">
    <property type="component" value="Unplaced"/>
</dbReference>
<dbReference type="GO" id="GO:0005964">
    <property type="term" value="C:phosphorylase kinase complex"/>
    <property type="evidence" value="ECO:0007669"/>
    <property type="project" value="TreeGrafter"/>
</dbReference>
<dbReference type="GO" id="GO:0005886">
    <property type="term" value="C:plasma membrane"/>
    <property type="evidence" value="ECO:0007669"/>
    <property type="project" value="UniProtKB-SubCell"/>
</dbReference>
<dbReference type="GO" id="GO:0005516">
    <property type="term" value="F:calmodulin binding"/>
    <property type="evidence" value="ECO:0007669"/>
    <property type="project" value="UniProtKB-KW"/>
</dbReference>
<dbReference type="GO" id="GO:0005977">
    <property type="term" value="P:glycogen metabolic process"/>
    <property type="evidence" value="ECO:0007669"/>
    <property type="project" value="UniProtKB-UniPathway"/>
</dbReference>
<dbReference type="FunFam" id="1.50.10.10:FF:000004">
    <property type="entry name" value="Phosphorylase b kinase regulatory subunit"/>
    <property type="match status" value="1"/>
</dbReference>
<dbReference type="Gene3D" id="1.50.10.10">
    <property type="match status" value="1"/>
</dbReference>
<dbReference type="InterPro" id="IPR008928">
    <property type="entry name" value="6-hairpin_glycosidase_sf"/>
</dbReference>
<dbReference type="InterPro" id="IPR012341">
    <property type="entry name" value="6hp_glycosidase-like_sf"/>
</dbReference>
<dbReference type="InterPro" id="IPR011613">
    <property type="entry name" value="GH15-like"/>
</dbReference>
<dbReference type="InterPro" id="IPR045583">
    <property type="entry name" value="KPBA/B_C"/>
</dbReference>
<dbReference type="InterPro" id="IPR008734">
    <property type="entry name" value="PHK_A/B_su"/>
</dbReference>
<dbReference type="PANTHER" id="PTHR10749">
    <property type="entry name" value="PHOSPHORYLASE B KINASE REGULATORY SUBUNIT"/>
    <property type="match status" value="1"/>
</dbReference>
<dbReference type="PANTHER" id="PTHR10749:SF5">
    <property type="entry name" value="PHOSPHORYLASE B KINASE REGULATORY SUBUNIT ALPHA, LIVER ISOFORM"/>
    <property type="match status" value="1"/>
</dbReference>
<dbReference type="Pfam" id="PF00723">
    <property type="entry name" value="Glyco_hydro_15"/>
    <property type="match status" value="1"/>
</dbReference>
<dbReference type="Pfam" id="PF19292">
    <property type="entry name" value="KPBB_C"/>
    <property type="match status" value="1"/>
</dbReference>
<dbReference type="SUPFAM" id="SSF48208">
    <property type="entry name" value="Six-hairpin glycosidases"/>
    <property type="match status" value="1"/>
</dbReference>
<feature type="chain" id="PRO_0000057732" description="Phosphorylase b kinase regulatory subunit alpha, liver isoform">
    <location>
        <begin position="1"/>
        <end position="1235"/>
    </location>
</feature>
<feature type="region of interest" description="Calmodulin-binding" evidence="3">
    <location>
        <begin position="808"/>
        <end position="838"/>
    </location>
</feature>
<feature type="region of interest" description="Disordered" evidence="4">
    <location>
        <begin position="976"/>
        <end position="1002"/>
    </location>
</feature>
<feature type="region of interest" description="Disordered" evidence="4">
    <location>
        <begin position="1032"/>
        <end position="1060"/>
    </location>
</feature>
<feature type="region of interest" description="Calmodulin-binding" evidence="3">
    <location>
        <begin position="1059"/>
        <end position="1099"/>
    </location>
</feature>
<feature type="compositionally biased region" description="Low complexity" evidence="4">
    <location>
        <begin position="976"/>
        <end position="986"/>
    </location>
</feature>
<feature type="compositionally biased region" description="Low complexity" evidence="4">
    <location>
        <begin position="1032"/>
        <end position="1053"/>
    </location>
</feature>
<feature type="modified residue" description="Phosphoserine" evidence="2">
    <location>
        <position position="697"/>
    </location>
</feature>
<feature type="modified residue" description="Phosphoserine" evidence="2">
    <location>
        <position position="731"/>
    </location>
</feature>
<feature type="modified residue" description="Phosphoserine" evidence="2">
    <location>
        <position position="737"/>
    </location>
</feature>
<feature type="modified residue" description="Phosphoserine" evidence="2">
    <location>
        <position position="984"/>
    </location>
</feature>
<feature type="modified residue" description="Phosphoserine" evidence="2">
    <location>
        <position position="1016"/>
    </location>
</feature>
<feature type="modified residue" description="Phosphoserine" evidence="2">
    <location>
        <position position="1044"/>
    </location>
</feature>
<feature type="lipid moiety-binding region" description="S-farnesyl cysteine" evidence="1">
    <location>
        <position position="1232"/>
    </location>
</feature>
<gene>
    <name type="primary">PHKA2</name>
</gene>
<sequence>MRSRSNSGVRLDGYARLVQQTILCYQNPVTGLLSASHEQKDAWVRDNIYSILAVWGLGMAYRKNADRDEDKAKAYELEQNVVKLMRGLLQCMMRQVDKVEKFKYTQSTKDSLHAKYNTATCSTVVGDDQWGHLQVDATSLFLLFLAQMTASGLRIIFTLDEVAFIQNLVFYIEAAYKVADYGMWERGDKTNQGIPELNASSVGMAKAALEAIDELDLFGAHGGRKSVIHVLPDEVEHCQSILFSMLPRASTSKEIDAGLLSIISFPAFAVEDANLVNVTKSEIISKLQGRYGCCRFLRDGYKTPREDPNRLHYDPAELKLFENIECEWPVFWTYFIIDGIFNGDALQVQEYQEALEGILIRGKDGIRLVPELYAIPPNKVDEEYKNPHTVDRVPLGKLPHLWGQSLYILSSLLAEGFLATGEIDPLNRRFSTSVKPDVVVQVTVLAENSHIKELLRKHGVDVQSIADIYPIRVQPGRILSHIYAKLGRNKNMKLSGRPYRHIGVLGTSKLYVIRNQIFTFTPQFTDQHHFYLALDNEMIVEMLRIELAYLCTCWRMTGRPTLTFPITHTMLTNDGSDIHSAVLSTIRKLEDGYFGGARVQLGNLSEFLTTSFYTYLTFLDPDCDEKLFDDASEGSFSPDSDSDLGGYLEETYNQVTESQDELDKYINHLLQSTYSKCHLPPLCKKMEDHNVFSAIHSTRDILSMMAKAKGLEVPFAPMTLPTKALSVHRKSLNLVDSPQPLLKRILKRLHWPKDERGDVDCEKLVEQLKDCCTLQDQADILYILYVLKGPSWDTALSGQHGVTVHNLLSELYGKAGLNQEWGLIRYISGLLRKKVEVLAEACADLLSHQKQLTVGLPPEPREKTISAPLPPEELTELIYEASGEDISIAVLTQEIVVYLAMYVRAQPALFVEMLRLRIGLIIQVMATELARSLNCSGEEASESLMNLSPFDMKNLLHHILSGKEFGVERSMRPIHSSASSPAISIHEVGHTGVTKTERSGINRLRSEMKQMTRRFSADEQFFPVSQTVSSSAYSKSVRSSTPSSPTGTSSSDSGGHHISWGERQGQWLRRRRLDGAINRVPVGFYQRVWKILQKCHGLSIDGYVLPSSTTREMTPQEIKFAVHVESVLNRVSQPEYRQLLVEAIMVLTLLSDTEMESIGGIIHVDQIVQMANQLFLQEQISTGAMDTLEKDQATGICHFFYDSAPSGAYGTMTYLTRAVASHLQELLPSSGCQTQ</sequence>
<comment type="function">
    <text>Phosphorylase b kinase catalyzes the phosphorylation of serine in certain substrates, including troponin I. The alpha chain may bind calmodulin.</text>
</comment>
<comment type="activity regulation">
    <text>By phosphorylation of various serine residues and by calcium.</text>
</comment>
<comment type="pathway">
    <text>Glycan biosynthesis; glycogen metabolism.</text>
</comment>
<comment type="subunit">
    <text>Hexadecamer of 4 heterotetramers, each composed of alpha, beta, gamma, and delta subunits. Alpha (PHKA1 or PHKA2) and beta (PHKB) are regulatory subunits, gamma (PHKG1 or PHKG2) is the catalytic subunit, and delta is calmodulin.</text>
</comment>
<comment type="subcellular location">
    <subcellularLocation>
        <location evidence="5">Cell membrane</location>
        <topology evidence="5">Lipid-anchor</topology>
        <orientation evidence="5">Cytoplasmic side</orientation>
    </subcellularLocation>
</comment>
<comment type="tissue specificity">
    <text>Predominantly expressed in liver and other non-muscle tissues.</text>
</comment>
<comment type="PTM">
    <text evidence="1">Although the final Cys may be farnesylated, the terminal tripeptide is probably not removed, and the C-terminus is not methylated.</text>
</comment>
<comment type="similarity">
    <text evidence="5">Belongs to the phosphorylase b kinase regulatory chain family.</text>
</comment>
<reference key="1">
    <citation type="journal article" date="1992" name="Proc. Natl. Acad. Sci. U.S.A.">
        <title>cDNA cloning of a liver isoform of the phosphorylase kinase alpha subunit and mapping of the gene to Xp22.2-p22.1, the region of human X-linked liver glycogenosis.</title>
        <authorList>
            <person name="Davidson J.J."/>
            <person name="Oezelik T."/>
            <person name="Hamacher C."/>
            <person name="Willems P.J."/>
            <person name="Francke U."/>
            <person name="Kilimann M.W."/>
        </authorList>
    </citation>
    <scope>NUCLEOTIDE SEQUENCE [MRNA]</scope>
    <source>
        <tissue>Liver</tissue>
    </source>
</reference>
<keyword id="KW-0112">Calmodulin-binding</keyword>
<keyword id="KW-0119">Carbohydrate metabolism</keyword>
<keyword id="KW-1003">Cell membrane</keyword>
<keyword id="KW-0321">Glycogen metabolism</keyword>
<keyword id="KW-0449">Lipoprotein</keyword>
<keyword id="KW-0472">Membrane</keyword>
<keyword id="KW-0597">Phosphoprotein</keyword>
<keyword id="KW-0636">Prenylation</keyword>
<keyword id="KW-1185">Reference proteome</keyword>
<organism>
    <name type="scientific">Oryctolagus cuniculus</name>
    <name type="common">Rabbit</name>
    <dbReference type="NCBI Taxonomy" id="9986"/>
    <lineage>
        <taxon>Eukaryota</taxon>
        <taxon>Metazoa</taxon>
        <taxon>Chordata</taxon>
        <taxon>Craniata</taxon>
        <taxon>Vertebrata</taxon>
        <taxon>Euteleostomi</taxon>
        <taxon>Mammalia</taxon>
        <taxon>Eutheria</taxon>
        <taxon>Euarchontoglires</taxon>
        <taxon>Glires</taxon>
        <taxon>Lagomorpha</taxon>
        <taxon>Leporidae</taxon>
        <taxon>Oryctolagus</taxon>
    </lineage>
</organism>